<sequence length="231" mass="24818">MKIGIIGAMDEEVSILKAKLNNMETTIIAGCEFYQGELNGKQVILTKSGIGKVAAAVATTLLLERFNPGQVINTGSAGGYDTTLNVGDIVISTEVRFHDVDLTAFGYEIGQMAQLPAAFPADKNLIFAAQKAAETITHLKTIQGLICTGDIFMADPTKAEIARHNFPTMAACEMEAAAIAQVCYQFKVPFVIIRSLSDIAGKKSELSFEQYLPIAAKNASILVEEIINNLN</sequence>
<dbReference type="EC" id="3.2.2.9" evidence="1"/>
<dbReference type="EMBL" id="CP000510">
    <property type="protein sequence ID" value="ABM02762.1"/>
    <property type="molecule type" value="Genomic_DNA"/>
</dbReference>
<dbReference type="RefSeq" id="WP_011769325.1">
    <property type="nucleotide sequence ID" value="NC_008709.1"/>
</dbReference>
<dbReference type="SMR" id="A1STE7"/>
<dbReference type="STRING" id="357804.Ping_0920"/>
<dbReference type="KEGG" id="pin:Ping_0920"/>
<dbReference type="eggNOG" id="COG0775">
    <property type="taxonomic scope" value="Bacteria"/>
</dbReference>
<dbReference type="HOGENOM" id="CLU_031248_2_2_6"/>
<dbReference type="OrthoDB" id="9792278at2"/>
<dbReference type="UniPathway" id="UPA00904">
    <property type="reaction ID" value="UER00871"/>
</dbReference>
<dbReference type="Proteomes" id="UP000000639">
    <property type="component" value="Chromosome"/>
</dbReference>
<dbReference type="GO" id="GO:0005829">
    <property type="term" value="C:cytosol"/>
    <property type="evidence" value="ECO:0007669"/>
    <property type="project" value="TreeGrafter"/>
</dbReference>
<dbReference type="GO" id="GO:0008782">
    <property type="term" value="F:adenosylhomocysteine nucleosidase activity"/>
    <property type="evidence" value="ECO:0007669"/>
    <property type="project" value="UniProtKB-UniRule"/>
</dbReference>
<dbReference type="GO" id="GO:0008930">
    <property type="term" value="F:methylthioadenosine nucleosidase activity"/>
    <property type="evidence" value="ECO:0007669"/>
    <property type="project" value="UniProtKB-UniRule"/>
</dbReference>
<dbReference type="GO" id="GO:0019509">
    <property type="term" value="P:L-methionine salvage from methylthioadenosine"/>
    <property type="evidence" value="ECO:0007669"/>
    <property type="project" value="UniProtKB-UniRule"/>
</dbReference>
<dbReference type="GO" id="GO:0019284">
    <property type="term" value="P:L-methionine salvage from S-adenosylmethionine"/>
    <property type="evidence" value="ECO:0007669"/>
    <property type="project" value="TreeGrafter"/>
</dbReference>
<dbReference type="GO" id="GO:0009164">
    <property type="term" value="P:nucleoside catabolic process"/>
    <property type="evidence" value="ECO:0007669"/>
    <property type="project" value="InterPro"/>
</dbReference>
<dbReference type="CDD" id="cd09008">
    <property type="entry name" value="MTAN"/>
    <property type="match status" value="1"/>
</dbReference>
<dbReference type="FunFam" id="3.40.50.1580:FF:000001">
    <property type="entry name" value="MTA/SAH nucleosidase family protein"/>
    <property type="match status" value="1"/>
</dbReference>
<dbReference type="Gene3D" id="3.40.50.1580">
    <property type="entry name" value="Nucleoside phosphorylase domain"/>
    <property type="match status" value="1"/>
</dbReference>
<dbReference type="HAMAP" id="MF_01684">
    <property type="entry name" value="Salvage_MtnN"/>
    <property type="match status" value="1"/>
</dbReference>
<dbReference type="InterPro" id="IPR010049">
    <property type="entry name" value="MTA_SAH_Nsdase"/>
</dbReference>
<dbReference type="InterPro" id="IPR000845">
    <property type="entry name" value="Nucleoside_phosphorylase_d"/>
</dbReference>
<dbReference type="InterPro" id="IPR035994">
    <property type="entry name" value="Nucleoside_phosphorylase_sf"/>
</dbReference>
<dbReference type="NCBIfam" id="TIGR01704">
    <property type="entry name" value="MTA_SAH-Nsdase"/>
    <property type="match status" value="1"/>
</dbReference>
<dbReference type="NCBIfam" id="NF004079">
    <property type="entry name" value="PRK05584.1"/>
    <property type="match status" value="1"/>
</dbReference>
<dbReference type="PANTHER" id="PTHR46832">
    <property type="entry name" value="5'-METHYLTHIOADENOSINE/S-ADENOSYLHOMOCYSTEINE NUCLEOSIDASE"/>
    <property type="match status" value="1"/>
</dbReference>
<dbReference type="PANTHER" id="PTHR46832:SF1">
    <property type="entry name" value="5'-METHYLTHIOADENOSINE_S-ADENOSYLHOMOCYSTEINE NUCLEOSIDASE"/>
    <property type="match status" value="1"/>
</dbReference>
<dbReference type="Pfam" id="PF01048">
    <property type="entry name" value="PNP_UDP_1"/>
    <property type="match status" value="1"/>
</dbReference>
<dbReference type="SUPFAM" id="SSF53167">
    <property type="entry name" value="Purine and uridine phosphorylases"/>
    <property type="match status" value="1"/>
</dbReference>
<organism>
    <name type="scientific">Psychromonas ingrahamii (strain DSM 17664 / CCUG 51855 / 37)</name>
    <dbReference type="NCBI Taxonomy" id="357804"/>
    <lineage>
        <taxon>Bacteria</taxon>
        <taxon>Pseudomonadati</taxon>
        <taxon>Pseudomonadota</taxon>
        <taxon>Gammaproteobacteria</taxon>
        <taxon>Alteromonadales</taxon>
        <taxon>Psychromonadaceae</taxon>
        <taxon>Psychromonas</taxon>
    </lineage>
</organism>
<keyword id="KW-0028">Amino-acid biosynthesis</keyword>
<keyword id="KW-0378">Hydrolase</keyword>
<keyword id="KW-0486">Methionine biosynthesis</keyword>
<keyword id="KW-1185">Reference proteome</keyword>
<gene>
    <name evidence="1" type="primary">mtnN</name>
    <name type="ordered locus">Ping_0920</name>
</gene>
<feature type="chain" id="PRO_0000359325" description="5'-methylthioadenosine/S-adenosylhomocysteine nucleosidase">
    <location>
        <begin position="1"/>
        <end position="231"/>
    </location>
</feature>
<feature type="active site" description="Proton acceptor" evidence="1">
    <location>
        <position position="12"/>
    </location>
</feature>
<feature type="active site" description="Proton donor" evidence="1">
    <location>
        <position position="198"/>
    </location>
</feature>
<feature type="binding site" evidence="1">
    <location>
        <position position="78"/>
    </location>
    <ligand>
        <name>substrate</name>
    </ligand>
</feature>
<feature type="binding site" evidence="1">
    <location>
        <position position="153"/>
    </location>
    <ligand>
        <name>substrate</name>
    </ligand>
</feature>
<feature type="binding site" evidence="1">
    <location>
        <begin position="174"/>
        <end position="175"/>
    </location>
    <ligand>
        <name>substrate</name>
    </ligand>
</feature>
<name>MTNN_PSYIN</name>
<reference key="1">
    <citation type="journal article" date="2008" name="BMC Genomics">
        <title>Genomics of an extreme psychrophile, Psychromonas ingrahamii.</title>
        <authorList>
            <person name="Riley M."/>
            <person name="Staley J.T."/>
            <person name="Danchin A."/>
            <person name="Wang T.Z."/>
            <person name="Brettin T.S."/>
            <person name="Hauser L.J."/>
            <person name="Land M.L."/>
            <person name="Thompson L.S."/>
        </authorList>
    </citation>
    <scope>NUCLEOTIDE SEQUENCE [LARGE SCALE GENOMIC DNA]</scope>
    <source>
        <strain>DSM 17664 / CCUG 51855 / 37</strain>
    </source>
</reference>
<accession>A1STE7</accession>
<evidence type="ECO:0000255" key="1">
    <source>
        <dbReference type="HAMAP-Rule" id="MF_01684"/>
    </source>
</evidence>
<comment type="function">
    <text evidence="1">Catalyzes the irreversible cleavage of the glycosidic bond in both 5'-methylthioadenosine (MTA) and S-adenosylhomocysteine (SAH/AdoHcy) to adenine and the corresponding thioribose, 5'-methylthioribose and S-ribosylhomocysteine, respectively. Also cleaves 5'-deoxyadenosine, a toxic by-product of radical S-adenosylmethionine (SAM) enzymes, into 5-deoxyribose and adenine.</text>
</comment>
<comment type="catalytic activity">
    <reaction evidence="1">
        <text>S-adenosyl-L-homocysteine + H2O = S-(5-deoxy-D-ribos-5-yl)-L-homocysteine + adenine</text>
        <dbReference type="Rhea" id="RHEA:17805"/>
        <dbReference type="ChEBI" id="CHEBI:15377"/>
        <dbReference type="ChEBI" id="CHEBI:16708"/>
        <dbReference type="ChEBI" id="CHEBI:57856"/>
        <dbReference type="ChEBI" id="CHEBI:58195"/>
        <dbReference type="EC" id="3.2.2.9"/>
    </reaction>
</comment>
<comment type="catalytic activity">
    <reaction evidence="1">
        <text>S-methyl-5'-thioadenosine + H2O = 5-(methylsulfanyl)-D-ribose + adenine</text>
        <dbReference type="Rhea" id="RHEA:13617"/>
        <dbReference type="ChEBI" id="CHEBI:15377"/>
        <dbReference type="ChEBI" id="CHEBI:16708"/>
        <dbReference type="ChEBI" id="CHEBI:17509"/>
        <dbReference type="ChEBI" id="CHEBI:78440"/>
        <dbReference type="EC" id="3.2.2.9"/>
    </reaction>
</comment>
<comment type="catalytic activity">
    <reaction evidence="1">
        <text>5'-deoxyadenosine + H2O = 5-deoxy-D-ribose + adenine</text>
        <dbReference type="Rhea" id="RHEA:29859"/>
        <dbReference type="ChEBI" id="CHEBI:15377"/>
        <dbReference type="ChEBI" id="CHEBI:16708"/>
        <dbReference type="ChEBI" id="CHEBI:17319"/>
        <dbReference type="ChEBI" id="CHEBI:149540"/>
        <dbReference type="EC" id="3.2.2.9"/>
    </reaction>
    <physiologicalReaction direction="left-to-right" evidence="1">
        <dbReference type="Rhea" id="RHEA:29860"/>
    </physiologicalReaction>
</comment>
<comment type="pathway">
    <text evidence="1">Amino-acid biosynthesis; L-methionine biosynthesis via salvage pathway; S-methyl-5-thio-alpha-D-ribose 1-phosphate from S-methyl-5'-thioadenosine (hydrolase route): step 1/2.</text>
</comment>
<comment type="similarity">
    <text evidence="1">Belongs to the PNP/UDP phosphorylase family. MtnN subfamily.</text>
</comment>
<proteinExistence type="inferred from homology"/>
<protein>
    <recommendedName>
        <fullName evidence="1">5'-methylthioadenosine/S-adenosylhomocysteine nucleosidase</fullName>
        <shortName evidence="1">MTA/SAH nucleosidase</shortName>
        <shortName evidence="1">MTAN</shortName>
        <ecNumber evidence="1">3.2.2.9</ecNumber>
    </recommendedName>
    <alternativeName>
        <fullName evidence="1">5'-deoxyadenosine nucleosidase</fullName>
        <shortName evidence="1">DOA nucleosidase</shortName>
        <shortName evidence="1">dAdo nucleosidase</shortName>
    </alternativeName>
    <alternativeName>
        <fullName evidence="1">5'-methylthioadenosine nucleosidase</fullName>
        <shortName evidence="1">MTA nucleosidase</shortName>
    </alternativeName>
    <alternativeName>
        <fullName evidence="1">S-adenosylhomocysteine nucleosidase</fullName>
        <shortName evidence="1">AdoHcy nucleosidase</shortName>
        <shortName evidence="1">SAH nucleosidase</shortName>
        <shortName evidence="1">SRH nucleosidase</shortName>
    </alternativeName>
</protein>